<organism>
    <name type="scientific">Chlorobium phaeobacteroides (strain DSM 266 / SMG 266 / 2430)</name>
    <dbReference type="NCBI Taxonomy" id="290317"/>
    <lineage>
        <taxon>Bacteria</taxon>
        <taxon>Pseudomonadati</taxon>
        <taxon>Chlorobiota</taxon>
        <taxon>Chlorobiia</taxon>
        <taxon>Chlorobiales</taxon>
        <taxon>Chlorobiaceae</taxon>
        <taxon>Chlorobium/Pelodictyon group</taxon>
        <taxon>Chlorobium</taxon>
    </lineage>
</organism>
<comment type="function">
    <text evidence="1">Catalyzes the hydrolysis of the adenine ring of phosphoribosyl-AMP.</text>
</comment>
<comment type="catalytic activity">
    <reaction evidence="1">
        <text>1-(5-phospho-beta-D-ribosyl)-5'-AMP + H2O = 1-(5-phospho-beta-D-ribosyl)-5-[(5-phospho-beta-D-ribosylamino)methylideneamino]imidazole-4-carboxamide</text>
        <dbReference type="Rhea" id="RHEA:20049"/>
        <dbReference type="ChEBI" id="CHEBI:15377"/>
        <dbReference type="ChEBI" id="CHEBI:58435"/>
        <dbReference type="ChEBI" id="CHEBI:59457"/>
        <dbReference type="EC" id="3.5.4.19"/>
    </reaction>
</comment>
<comment type="cofactor">
    <cofactor evidence="1">
        <name>Mg(2+)</name>
        <dbReference type="ChEBI" id="CHEBI:18420"/>
    </cofactor>
    <text evidence="1">Binds 1 Mg(2+) ion per subunit.</text>
</comment>
<comment type="cofactor">
    <cofactor evidence="1">
        <name>Zn(2+)</name>
        <dbReference type="ChEBI" id="CHEBI:29105"/>
    </cofactor>
    <text evidence="1">Binds 1 zinc ion per subunit.</text>
</comment>
<comment type="pathway">
    <text evidence="1">Amino-acid biosynthesis; L-histidine biosynthesis; L-histidine from 5-phospho-alpha-D-ribose 1-diphosphate: step 3/9.</text>
</comment>
<comment type="subunit">
    <text evidence="1">Homodimer.</text>
</comment>
<comment type="subcellular location">
    <subcellularLocation>
        <location evidence="1">Cytoplasm</location>
    </subcellularLocation>
</comment>
<comment type="similarity">
    <text evidence="1">Belongs to the PRA-CH family.</text>
</comment>
<gene>
    <name evidence="1" type="primary">hisI</name>
    <name type="ordered locus">Cpha266_0479</name>
</gene>
<name>HIS3_CHLPD</name>
<evidence type="ECO:0000255" key="1">
    <source>
        <dbReference type="HAMAP-Rule" id="MF_01021"/>
    </source>
</evidence>
<accession>A1BDQ9</accession>
<dbReference type="EC" id="3.5.4.19" evidence="1"/>
<dbReference type="EMBL" id="CP000492">
    <property type="protein sequence ID" value="ABL64536.1"/>
    <property type="molecule type" value="Genomic_DNA"/>
</dbReference>
<dbReference type="RefSeq" id="WP_011744369.1">
    <property type="nucleotide sequence ID" value="NC_008639.1"/>
</dbReference>
<dbReference type="SMR" id="A1BDQ9"/>
<dbReference type="STRING" id="290317.Cpha266_0479"/>
<dbReference type="KEGG" id="cph:Cpha266_0479"/>
<dbReference type="eggNOG" id="COG0139">
    <property type="taxonomic scope" value="Bacteria"/>
</dbReference>
<dbReference type="HOGENOM" id="CLU_048577_5_0_10"/>
<dbReference type="OrthoDB" id="9795769at2"/>
<dbReference type="UniPathway" id="UPA00031">
    <property type="reaction ID" value="UER00008"/>
</dbReference>
<dbReference type="Proteomes" id="UP000008701">
    <property type="component" value="Chromosome"/>
</dbReference>
<dbReference type="GO" id="GO:0005737">
    <property type="term" value="C:cytoplasm"/>
    <property type="evidence" value="ECO:0007669"/>
    <property type="project" value="UniProtKB-SubCell"/>
</dbReference>
<dbReference type="GO" id="GO:0000287">
    <property type="term" value="F:magnesium ion binding"/>
    <property type="evidence" value="ECO:0007669"/>
    <property type="project" value="UniProtKB-UniRule"/>
</dbReference>
<dbReference type="GO" id="GO:0004635">
    <property type="term" value="F:phosphoribosyl-AMP cyclohydrolase activity"/>
    <property type="evidence" value="ECO:0007669"/>
    <property type="project" value="UniProtKB-UniRule"/>
</dbReference>
<dbReference type="GO" id="GO:0008270">
    <property type="term" value="F:zinc ion binding"/>
    <property type="evidence" value="ECO:0007669"/>
    <property type="project" value="UniProtKB-UniRule"/>
</dbReference>
<dbReference type="GO" id="GO:0000105">
    <property type="term" value="P:L-histidine biosynthetic process"/>
    <property type="evidence" value="ECO:0007669"/>
    <property type="project" value="UniProtKB-UniRule"/>
</dbReference>
<dbReference type="FunFam" id="3.10.20.810:FF:000001">
    <property type="entry name" value="Histidine biosynthesis bifunctional protein HisIE"/>
    <property type="match status" value="1"/>
</dbReference>
<dbReference type="Gene3D" id="3.10.20.810">
    <property type="entry name" value="Phosphoribosyl-AMP cyclohydrolase"/>
    <property type="match status" value="1"/>
</dbReference>
<dbReference type="HAMAP" id="MF_01021">
    <property type="entry name" value="HisI"/>
    <property type="match status" value="1"/>
</dbReference>
<dbReference type="InterPro" id="IPR026660">
    <property type="entry name" value="PRA-CH"/>
</dbReference>
<dbReference type="InterPro" id="IPR002496">
    <property type="entry name" value="PRib_AMP_CycHydrolase_dom"/>
</dbReference>
<dbReference type="InterPro" id="IPR038019">
    <property type="entry name" value="PRib_AMP_CycHydrolase_sf"/>
</dbReference>
<dbReference type="NCBIfam" id="NF000768">
    <property type="entry name" value="PRK00051.1"/>
    <property type="match status" value="1"/>
</dbReference>
<dbReference type="PANTHER" id="PTHR42945">
    <property type="entry name" value="HISTIDINE BIOSYNTHESIS BIFUNCTIONAL PROTEIN"/>
    <property type="match status" value="1"/>
</dbReference>
<dbReference type="PANTHER" id="PTHR42945:SF1">
    <property type="entry name" value="HISTIDINE BIOSYNTHESIS BIFUNCTIONAL PROTEIN HIS7"/>
    <property type="match status" value="1"/>
</dbReference>
<dbReference type="Pfam" id="PF01502">
    <property type="entry name" value="PRA-CH"/>
    <property type="match status" value="1"/>
</dbReference>
<dbReference type="SUPFAM" id="SSF141734">
    <property type="entry name" value="HisI-like"/>
    <property type="match status" value="1"/>
</dbReference>
<keyword id="KW-0028">Amino-acid biosynthesis</keyword>
<keyword id="KW-0963">Cytoplasm</keyword>
<keyword id="KW-0368">Histidine biosynthesis</keyword>
<keyword id="KW-0378">Hydrolase</keyword>
<keyword id="KW-0460">Magnesium</keyword>
<keyword id="KW-0479">Metal-binding</keyword>
<keyword id="KW-1185">Reference proteome</keyword>
<keyword id="KW-0862">Zinc</keyword>
<protein>
    <recommendedName>
        <fullName evidence="1">Phosphoribosyl-AMP cyclohydrolase</fullName>
        <shortName evidence="1">PRA-CH</shortName>
        <ecNumber evidence="1">3.5.4.19</ecNumber>
    </recommendedName>
</protein>
<reference key="1">
    <citation type="submission" date="2006-12" db="EMBL/GenBank/DDBJ databases">
        <title>Complete sequence of Chlorobium phaeobacteroides DSM 266.</title>
        <authorList>
            <consortium name="US DOE Joint Genome Institute"/>
            <person name="Copeland A."/>
            <person name="Lucas S."/>
            <person name="Lapidus A."/>
            <person name="Barry K."/>
            <person name="Detter J.C."/>
            <person name="Glavina del Rio T."/>
            <person name="Hammon N."/>
            <person name="Israni S."/>
            <person name="Pitluck S."/>
            <person name="Goltsman E."/>
            <person name="Schmutz J."/>
            <person name="Larimer F."/>
            <person name="Land M."/>
            <person name="Hauser L."/>
            <person name="Mikhailova N."/>
            <person name="Li T."/>
            <person name="Overmann J."/>
            <person name="Bryant D.A."/>
            <person name="Richardson P."/>
        </authorList>
    </citation>
    <scope>NUCLEOTIDE SEQUENCE [LARGE SCALE GENOMIC DNA]</scope>
    <source>
        <strain>DSM 266 / SMG 266 / 2430</strain>
    </source>
</reference>
<proteinExistence type="inferred from homology"/>
<feature type="chain" id="PRO_1000063400" description="Phosphoribosyl-AMP cyclohydrolase">
    <location>
        <begin position="1"/>
        <end position="137"/>
    </location>
</feature>
<feature type="binding site" evidence="1">
    <location>
        <position position="84"/>
    </location>
    <ligand>
        <name>Mg(2+)</name>
        <dbReference type="ChEBI" id="CHEBI:18420"/>
    </ligand>
</feature>
<feature type="binding site" evidence="1">
    <location>
        <position position="85"/>
    </location>
    <ligand>
        <name>Zn(2+)</name>
        <dbReference type="ChEBI" id="CHEBI:29105"/>
        <note>ligand shared between dimeric partners</note>
    </ligand>
</feature>
<feature type="binding site" evidence="1">
    <location>
        <position position="86"/>
    </location>
    <ligand>
        <name>Mg(2+)</name>
        <dbReference type="ChEBI" id="CHEBI:18420"/>
    </ligand>
</feature>
<feature type="binding site" evidence="1">
    <location>
        <position position="88"/>
    </location>
    <ligand>
        <name>Mg(2+)</name>
        <dbReference type="ChEBI" id="CHEBI:18420"/>
    </ligand>
</feature>
<feature type="binding site" evidence="1">
    <location>
        <position position="101"/>
    </location>
    <ligand>
        <name>Zn(2+)</name>
        <dbReference type="ChEBI" id="CHEBI:29105"/>
        <note>ligand shared between dimeric partners</note>
    </ligand>
</feature>
<feature type="binding site" evidence="1">
    <location>
        <position position="108"/>
    </location>
    <ligand>
        <name>Zn(2+)</name>
        <dbReference type="ChEBI" id="CHEBI:29105"/>
        <note>ligand shared between dimeric partners</note>
    </ligand>
</feature>
<sequence length="137" mass="15743">MSENEDLQKSFLDTVKYDEKGLVPAIVQDHETGKVLMMAWMNHESLLMTLEKKKACYWSRSRQKLWLKGESSGNMQDVHDILIDCDGDTILLKVSQKGGACHVGYHSCFYRKVKETLDMEICDTLMFNPDDVYGKKS</sequence>